<name>TM177_DANRE</name>
<proteinExistence type="evidence at transcript level"/>
<dbReference type="EMBL" id="BC059692">
    <property type="protein sequence ID" value="AAH59692.1"/>
    <property type="molecule type" value="mRNA"/>
</dbReference>
<dbReference type="RefSeq" id="NP_955888.1">
    <property type="nucleotide sequence ID" value="NM_199594.1"/>
</dbReference>
<dbReference type="FunCoup" id="Q6PBI8">
    <property type="interactions" value="647"/>
</dbReference>
<dbReference type="STRING" id="7955.ENSDARP00000091517"/>
<dbReference type="PaxDb" id="7955-ENSDARP00000091517"/>
<dbReference type="Ensembl" id="ENSDART00000100744">
    <property type="protein sequence ID" value="ENSDARP00000091517"/>
    <property type="gene ID" value="ENSDARG00000069301"/>
</dbReference>
<dbReference type="Ensembl" id="ENSDART00000160393">
    <property type="protein sequence ID" value="ENSDARP00000134056"/>
    <property type="gene ID" value="ENSDARG00000069301"/>
</dbReference>
<dbReference type="GeneID" id="556875"/>
<dbReference type="KEGG" id="dre:556875"/>
<dbReference type="AGR" id="ZFIN:ZDB-GENE-030131-993"/>
<dbReference type="CTD" id="80775"/>
<dbReference type="ZFIN" id="ZDB-GENE-030131-993">
    <property type="gene designation" value="tmem177"/>
</dbReference>
<dbReference type="eggNOG" id="ENOG502QPPU">
    <property type="taxonomic scope" value="Eukaryota"/>
</dbReference>
<dbReference type="HOGENOM" id="CLU_074208_0_0_1"/>
<dbReference type="InParanoid" id="Q6PBI8"/>
<dbReference type="OMA" id="HTFGLKY"/>
<dbReference type="OrthoDB" id="110174at2759"/>
<dbReference type="PhylomeDB" id="Q6PBI8"/>
<dbReference type="TreeFam" id="TF328369"/>
<dbReference type="Reactome" id="R-DRE-9864848">
    <property type="pathway name" value="Complex IV assembly"/>
</dbReference>
<dbReference type="PRO" id="PR:Q6PBI8"/>
<dbReference type="Proteomes" id="UP000000437">
    <property type="component" value="Alternate scaffold 9"/>
</dbReference>
<dbReference type="Proteomes" id="UP000000437">
    <property type="component" value="Chromosome 9"/>
</dbReference>
<dbReference type="Bgee" id="ENSDARG00000069301">
    <property type="expression patterns" value="Expressed in muscle tissue and 27 other cell types or tissues"/>
</dbReference>
<dbReference type="ExpressionAtlas" id="Q6PBI8">
    <property type="expression patterns" value="baseline and differential"/>
</dbReference>
<dbReference type="GO" id="GO:0016020">
    <property type="term" value="C:membrane"/>
    <property type="evidence" value="ECO:0000318"/>
    <property type="project" value="GO_Central"/>
</dbReference>
<dbReference type="GO" id="GO:0005743">
    <property type="term" value="C:mitochondrial inner membrane"/>
    <property type="evidence" value="ECO:0000250"/>
    <property type="project" value="UniProtKB"/>
</dbReference>
<dbReference type="InterPro" id="IPR026620">
    <property type="entry name" value="TMEM177"/>
</dbReference>
<dbReference type="PANTHER" id="PTHR21824">
    <property type="entry name" value="TRANSMEMBRANE PROTEIN 177"/>
    <property type="match status" value="1"/>
</dbReference>
<dbReference type="PANTHER" id="PTHR21824:SF4">
    <property type="entry name" value="TRANSMEMBRANE PROTEIN 177"/>
    <property type="match status" value="1"/>
</dbReference>
<comment type="function">
    <text evidence="1">Plays a role in the early steps of cytochrome c oxidase subunit II (MT-CO2/COX2) maturation and is required for the stabilization of COX20 and the newly synthesized MT-CO2/COX2 protein.</text>
</comment>
<comment type="subcellular location">
    <subcellularLocation>
        <location evidence="1">Mitochondrion inner membrane</location>
        <topology evidence="2">Multi-pass membrane protein</topology>
    </subcellularLocation>
</comment>
<comment type="similarity">
    <text evidence="3">Belongs to the TMEM177 family.</text>
</comment>
<evidence type="ECO:0000250" key="1">
    <source>
        <dbReference type="UniProtKB" id="Q53S58"/>
    </source>
</evidence>
<evidence type="ECO:0000255" key="2"/>
<evidence type="ECO:0000305" key="3"/>
<reference key="1">
    <citation type="submission" date="2003-10" db="EMBL/GenBank/DDBJ databases">
        <authorList>
            <consortium name="NIH - Zebrafish Gene Collection (ZGC) project"/>
        </authorList>
    </citation>
    <scope>NUCLEOTIDE SEQUENCE [LARGE SCALE MRNA]</scope>
    <source>
        <tissue>Eye</tissue>
    </source>
</reference>
<protein>
    <recommendedName>
        <fullName>Transmembrane protein 177</fullName>
    </recommendedName>
</protein>
<gene>
    <name type="primary">tmem177</name>
    <name type="ORF">zgc:73384</name>
</gene>
<keyword id="KW-0472">Membrane</keyword>
<keyword id="KW-0496">Mitochondrion</keyword>
<keyword id="KW-0999">Mitochondrion inner membrane</keyword>
<keyword id="KW-1185">Reference proteome</keyword>
<keyword id="KW-0812">Transmembrane</keyword>
<keyword id="KW-1133">Transmembrane helix</keyword>
<sequence>MSSRFLKISVFIQKYRTPLLLIGCGGVFSANIFYHIFPDHTYKKVYQAWHKGEPASLSEKLQNIFQEVLKDSSISTSGNFSAFAAFGFHPVGAGVPWLPSGAQIGIPANFNSSTADLEGITNRTILINGKELEWDSDSGVALKNSLVFSLEAQKFAIAREVARLGSGGPILHAAVAPVCLAGACVYSVALKQIFRFQAGSIIFRGVVNLLSLGLGVMTYVLAADSVSQWLDYRSDRRAAGLSRDYAKGGLEFYEKILTRNKTLRSLMGQKGEEMYAPSGNLFPAHLLQLRHATYTSRRDRILNLLKNENV</sequence>
<accession>Q6PBI8</accession>
<feature type="chain" id="PRO_0000282649" description="Transmembrane protein 177">
    <location>
        <begin position="1"/>
        <end position="310"/>
    </location>
</feature>
<feature type="topological domain" description="Mitochondrial matrix" evidence="3">
    <location>
        <begin position="1"/>
        <end position="17"/>
    </location>
</feature>
<feature type="transmembrane region" description="Helical" evidence="2">
    <location>
        <begin position="18"/>
        <end position="38"/>
    </location>
</feature>
<feature type="topological domain" description="Mitochondrial intermembrane" evidence="3">
    <location>
        <begin position="39"/>
        <end position="169"/>
    </location>
</feature>
<feature type="transmembrane region" description="Helical" evidence="2">
    <location>
        <begin position="170"/>
        <end position="190"/>
    </location>
</feature>
<feature type="topological domain" description="Mitochondrial matrix" evidence="3">
    <location>
        <begin position="191"/>
        <end position="200"/>
    </location>
</feature>
<feature type="transmembrane region" description="Helical" evidence="2">
    <location>
        <begin position="201"/>
        <end position="221"/>
    </location>
</feature>
<feature type="topological domain" description="Mitochondrial intermembrane" evidence="3">
    <location>
        <begin position="222"/>
        <end position="310"/>
    </location>
</feature>
<organism>
    <name type="scientific">Danio rerio</name>
    <name type="common">Zebrafish</name>
    <name type="synonym">Brachydanio rerio</name>
    <dbReference type="NCBI Taxonomy" id="7955"/>
    <lineage>
        <taxon>Eukaryota</taxon>
        <taxon>Metazoa</taxon>
        <taxon>Chordata</taxon>
        <taxon>Craniata</taxon>
        <taxon>Vertebrata</taxon>
        <taxon>Euteleostomi</taxon>
        <taxon>Actinopterygii</taxon>
        <taxon>Neopterygii</taxon>
        <taxon>Teleostei</taxon>
        <taxon>Ostariophysi</taxon>
        <taxon>Cypriniformes</taxon>
        <taxon>Danionidae</taxon>
        <taxon>Danioninae</taxon>
        <taxon>Danio</taxon>
    </lineage>
</organism>